<proteinExistence type="evidence at protein level"/>
<organism evidence="3">
    <name type="scientific">Faxonius limosus</name>
    <name type="common">Spinycheek crayfish</name>
    <name type="synonym">Orconectes limosus</name>
    <dbReference type="NCBI Taxonomy" id="28379"/>
    <lineage>
        <taxon>Eukaryota</taxon>
        <taxon>Metazoa</taxon>
        <taxon>Ecdysozoa</taxon>
        <taxon>Arthropoda</taxon>
        <taxon>Crustacea</taxon>
        <taxon>Multicrustacea</taxon>
        <taxon>Malacostraca</taxon>
        <taxon>Eumalacostraca</taxon>
        <taxon>Eucarida</taxon>
        <taxon>Decapoda</taxon>
        <taxon>Pleocyemata</taxon>
        <taxon>Astacidea</taxon>
        <taxon>Astacoidea</taxon>
        <taxon>Cambaridae</taxon>
        <taxon>Faxonius</taxon>
    </lineage>
</organism>
<name>PDHB_FAXLI</name>
<reference key="1">
    <citation type="journal article" date="2004" name="Mol. Cell. Proteomics">
        <title>Identification of neuropeptides from the sinus gland of the crayfish Orconectes limosus using nanoscale on-line liquid chromatography tandem mass spectrometry.</title>
        <authorList>
            <person name="Bulau P."/>
            <person name="Meisen I."/>
            <person name="Schmitz T."/>
            <person name="Keller R."/>
            <person name="Peter-Katalinic J."/>
        </authorList>
    </citation>
    <scope>PROTEIN SEQUENCE</scope>
    <scope>SUBCELLULAR LOCATION</scope>
    <scope>TISSUE SPECIFICITY</scope>
    <scope>MASS SPECTROMETRY</scope>
    <scope>AMIDATION AT VAL-18</scope>
    <source>
        <tissue>Eyestalk</tissue>
    </source>
</reference>
<protein>
    <recommendedName>
        <fullName>Pigment-dispersing hormone B</fullName>
        <shortName>PDH B</shortName>
    </recommendedName>
    <alternativeName>
        <fullName>Light-adapting distal retinal pigment hormone B</fullName>
        <shortName>DRPH B</shortName>
    </alternativeName>
</protein>
<feature type="peptide" id="PRO_0000044232" description="Pigment-dispersing hormone B">
    <location>
        <begin position="1"/>
        <end position="18"/>
    </location>
</feature>
<feature type="modified residue" description="Valine amide" evidence="2">
    <location>
        <position position="18"/>
    </location>
</feature>
<comment type="function">
    <text evidence="1">Causes the migration of the distal retinal pigment into the proximal end of the pigment chromatophore cells and thus decreases the amount of light entering the retinulas. May also function as a neurotransmitter and/or neuromodulator (By similarity).</text>
</comment>
<comment type="subcellular location">
    <subcellularLocation>
        <location evidence="2 3">Secreted</location>
    </subcellularLocation>
</comment>
<comment type="tissue specificity">
    <text evidence="2">Eyestalk sinus gland.</text>
</comment>
<comment type="mass spectrometry" mass="1871.87" method="Electrospray" evidence="2"/>
<comment type="similarity">
    <text evidence="3">Belongs to the arthropod PDH family.</text>
</comment>
<evidence type="ECO:0000250" key="1">
    <source>
        <dbReference type="UniProtKB" id="P37085"/>
    </source>
</evidence>
<evidence type="ECO:0000269" key="2">
    <source>
    </source>
</evidence>
<evidence type="ECO:0000305" key="3"/>
<keyword id="KW-0027">Amidation</keyword>
<keyword id="KW-0903">Direct protein sequencing</keyword>
<keyword id="KW-0372">Hormone</keyword>
<keyword id="KW-0527">Neuropeptide</keyword>
<keyword id="KW-0529">Neurotransmitter</keyword>
<keyword id="KW-0964">Secreted</keyword>
<accession>P83586</accession>
<sequence length="18" mass="1874">NSELINAILGSPTLFGEV</sequence>
<dbReference type="GO" id="GO:0005576">
    <property type="term" value="C:extracellular region"/>
    <property type="evidence" value="ECO:0007669"/>
    <property type="project" value="UniProtKB-SubCell"/>
</dbReference>
<dbReference type="GO" id="GO:0045202">
    <property type="term" value="C:synapse"/>
    <property type="evidence" value="ECO:0007669"/>
    <property type="project" value="GOC"/>
</dbReference>
<dbReference type="GO" id="GO:0005179">
    <property type="term" value="F:hormone activity"/>
    <property type="evidence" value="ECO:0007669"/>
    <property type="project" value="UniProtKB-KW"/>
</dbReference>
<dbReference type="GO" id="GO:0007268">
    <property type="term" value="P:chemical synaptic transmission"/>
    <property type="evidence" value="ECO:0007669"/>
    <property type="project" value="UniProtKB-KW"/>
</dbReference>
<dbReference type="GO" id="GO:0007218">
    <property type="term" value="P:neuropeptide signaling pathway"/>
    <property type="evidence" value="ECO:0007669"/>
    <property type="project" value="UniProtKB-KW"/>
</dbReference>